<sequence length="394" mass="41276">MVVFSKTAALVLGLSSAVSAAPAPTRKGFTINQIARPANKTRTINLPGMYARSLAKFGGTVPQSVKEAASKGSAVTTPQNNDEEYLTPVTVGKSTLHLDFDTGSADLWVFSDELPSSEQTGHDLYTPSSSATKLSGYTWDISYGDGSSASGDVYRDTVTVGGVTTNKQAVEAASKISSEFVQNTANDGLLGLAFSSINTVQPKAQTTFFDTVKSQLDSPLFAVQLKHDAPGVYDFGYIDDSKYTGSITYTDADSSQGYWGFSTDGYSIGDGSSSSSGFSAIADTGTTLILLDDEIVSAYYEQVSGAQESEEAGGYVFSCSTNPPDFTVVIGDYKAVVPGKYINYAPISTGSSTCFGGIQSNSGLGLSILGDVFLKSQYVVFNSEGPKLGFAAQA</sequence>
<organism>
    <name type="scientific">Aspergillus niger (strain ATCC MYA-4892 / CBS 513.88 / FGSC A1513)</name>
    <dbReference type="NCBI Taxonomy" id="425011"/>
    <lineage>
        <taxon>Eukaryota</taxon>
        <taxon>Fungi</taxon>
        <taxon>Dikarya</taxon>
        <taxon>Ascomycota</taxon>
        <taxon>Pezizomycotina</taxon>
        <taxon>Eurotiomycetes</taxon>
        <taxon>Eurotiomycetidae</taxon>
        <taxon>Eurotiales</taxon>
        <taxon>Aspergillaceae</taxon>
        <taxon>Aspergillus</taxon>
        <taxon>Aspergillus subgen. Circumdati</taxon>
    </lineage>
</organism>
<name>PEPA_ASPNC</name>
<gene>
    <name type="primary">pepA</name>
    <name type="ORF">An14g04710</name>
</gene>
<dbReference type="EC" id="3.4.23.18" evidence="1"/>
<dbReference type="EMBL" id="AM270324">
    <property type="protein sequence ID" value="CAK42031.1"/>
    <property type="molecule type" value="Genomic_DNA"/>
</dbReference>
<dbReference type="RefSeq" id="XP_001401093.1">
    <property type="nucleotide sequence ID" value="XM_001401056.2"/>
</dbReference>
<dbReference type="SMR" id="A2R3L3"/>
<dbReference type="MEROPS" id="A01.016"/>
<dbReference type="EnsemblFungi" id="CAK42031">
    <property type="protein sequence ID" value="CAK42031"/>
    <property type="gene ID" value="An14g04710"/>
</dbReference>
<dbReference type="GeneID" id="4987328"/>
<dbReference type="KEGG" id="ang:An14g04710"/>
<dbReference type="VEuPathDB" id="FungiDB:An14g04710"/>
<dbReference type="HOGENOM" id="CLU_013253_0_1_1"/>
<dbReference type="BRENDA" id="3.4.23.18">
    <property type="organism ID" value="518"/>
</dbReference>
<dbReference type="Proteomes" id="UP000006706">
    <property type="component" value="Chromosome 1R"/>
</dbReference>
<dbReference type="GO" id="GO:0005576">
    <property type="term" value="C:extracellular region"/>
    <property type="evidence" value="ECO:0007669"/>
    <property type="project" value="UniProtKB-SubCell"/>
</dbReference>
<dbReference type="GO" id="GO:0004190">
    <property type="term" value="F:aspartic-type endopeptidase activity"/>
    <property type="evidence" value="ECO:0007669"/>
    <property type="project" value="UniProtKB-KW"/>
</dbReference>
<dbReference type="GO" id="GO:0006508">
    <property type="term" value="P:proteolysis"/>
    <property type="evidence" value="ECO:0000314"/>
    <property type="project" value="AspGD"/>
</dbReference>
<dbReference type="CDD" id="cd06097">
    <property type="entry name" value="Aspergillopepsin_like"/>
    <property type="match status" value="1"/>
</dbReference>
<dbReference type="FunFam" id="2.40.70.10:FF:000024">
    <property type="entry name" value="Endothiapepsin"/>
    <property type="match status" value="1"/>
</dbReference>
<dbReference type="FunFam" id="2.40.70.10:FF:000026">
    <property type="entry name" value="Endothiapepsin"/>
    <property type="match status" value="1"/>
</dbReference>
<dbReference type="Gene3D" id="2.40.70.10">
    <property type="entry name" value="Acid Proteases"/>
    <property type="match status" value="2"/>
</dbReference>
<dbReference type="InterPro" id="IPR001461">
    <property type="entry name" value="Aspartic_peptidase_A1"/>
</dbReference>
<dbReference type="InterPro" id="IPR001969">
    <property type="entry name" value="Aspartic_peptidase_AS"/>
</dbReference>
<dbReference type="InterPro" id="IPR034163">
    <property type="entry name" value="Aspergillopepsin-like_cat_dom"/>
</dbReference>
<dbReference type="InterPro" id="IPR033121">
    <property type="entry name" value="PEPTIDASE_A1"/>
</dbReference>
<dbReference type="InterPro" id="IPR021109">
    <property type="entry name" value="Peptidase_aspartic_dom_sf"/>
</dbReference>
<dbReference type="PANTHER" id="PTHR47966:SF2">
    <property type="entry name" value="ASPERGILLOPEPSIN-1-RELATED"/>
    <property type="match status" value="1"/>
</dbReference>
<dbReference type="PANTHER" id="PTHR47966">
    <property type="entry name" value="BETA-SITE APP-CLEAVING ENZYME, ISOFORM A-RELATED"/>
    <property type="match status" value="1"/>
</dbReference>
<dbReference type="Pfam" id="PF00026">
    <property type="entry name" value="Asp"/>
    <property type="match status" value="1"/>
</dbReference>
<dbReference type="PRINTS" id="PR00792">
    <property type="entry name" value="PEPSIN"/>
</dbReference>
<dbReference type="SUPFAM" id="SSF50630">
    <property type="entry name" value="Acid proteases"/>
    <property type="match status" value="1"/>
</dbReference>
<dbReference type="PROSITE" id="PS00141">
    <property type="entry name" value="ASP_PROTEASE"/>
    <property type="match status" value="2"/>
</dbReference>
<dbReference type="PROSITE" id="PS51767">
    <property type="entry name" value="PEPTIDASE_A1"/>
    <property type="match status" value="1"/>
</dbReference>
<accession>A2R3L3</accession>
<reference key="1">
    <citation type="journal article" date="2007" name="Nat. Biotechnol.">
        <title>Genome sequencing and analysis of the versatile cell factory Aspergillus niger CBS 513.88.</title>
        <authorList>
            <person name="Pel H.J."/>
            <person name="de Winde J.H."/>
            <person name="Archer D.B."/>
            <person name="Dyer P.S."/>
            <person name="Hofmann G."/>
            <person name="Schaap P.J."/>
            <person name="Turner G."/>
            <person name="de Vries R.P."/>
            <person name="Albang R."/>
            <person name="Albermann K."/>
            <person name="Andersen M.R."/>
            <person name="Bendtsen J.D."/>
            <person name="Benen J.A.E."/>
            <person name="van den Berg M."/>
            <person name="Breestraat S."/>
            <person name="Caddick M.X."/>
            <person name="Contreras R."/>
            <person name="Cornell M."/>
            <person name="Coutinho P.M."/>
            <person name="Danchin E.G.J."/>
            <person name="Debets A.J.M."/>
            <person name="Dekker P."/>
            <person name="van Dijck P.W.M."/>
            <person name="van Dijk A."/>
            <person name="Dijkhuizen L."/>
            <person name="Driessen A.J.M."/>
            <person name="d'Enfert C."/>
            <person name="Geysens S."/>
            <person name="Goosen C."/>
            <person name="Groot G.S.P."/>
            <person name="de Groot P.W.J."/>
            <person name="Guillemette T."/>
            <person name="Henrissat B."/>
            <person name="Herweijer M."/>
            <person name="van den Hombergh J.P.T.W."/>
            <person name="van den Hondel C.A.M.J.J."/>
            <person name="van der Heijden R.T.J.M."/>
            <person name="van der Kaaij R.M."/>
            <person name="Klis F.M."/>
            <person name="Kools H.J."/>
            <person name="Kubicek C.P."/>
            <person name="van Kuyk P.A."/>
            <person name="Lauber J."/>
            <person name="Lu X."/>
            <person name="van der Maarel M.J.E.C."/>
            <person name="Meulenberg R."/>
            <person name="Menke H."/>
            <person name="Mortimer M.A."/>
            <person name="Nielsen J."/>
            <person name="Oliver S.G."/>
            <person name="Olsthoorn M."/>
            <person name="Pal K."/>
            <person name="van Peij N.N.M.E."/>
            <person name="Ram A.F.J."/>
            <person name="Rinas U."/>
            <person name="Roubos J.A."/>
            <person name="Sagt C.M.J."/>
            <person name="Schmoll M."/>
            <person name="Sun J."/>
            <person name="Ussery D."/>
            <person name="Varga J."/>
            <person name="Vervecken W."/>
            <person name="van de Vondervoort P.J.J."/>
            <person name="Wedler H."/>
            <person name="Woesten H.A.B."/>
            <person name="Zeng A.-P."/>
            <person name="van Ooyen A.J.J."/>
            <person name="Visser J."/>
            <person name="Stam H."/>
        </authorList>
    </citation>
    <scope>NUCLEOTIDE SEQUENCE [LARGE SCALE GENOMIC DNA]</scope>
    <source>
        <strain>ATCC MYA-4892 / CBS 513.88 / FGSC A1513</strain>
    </source>
</reference>
<comment type="function">
    <text evidence="1">Secreted aspartic endopeptidase that allows assimilation of proteinaceous substrates. The scissile peptide bond is attacked by a nucleophilic water molecule activated by two aspartic residues in the active site. Shows a broad primary substrate specificity. Favors hydrophobic residues at the P1 and P1' positions, but also accepts a lysine residue in the P1 position, leading to the activation of trypsinogen and chymotrypsinogen A.</text>
</comment>
<comment type="catalytic activity">
    <reaction evidence="1">
        <text>Hydrolysis of proteins with broad specificity. Generally favors hydrophobic residues in P1 and P1', but also accepts Lys in P1, which leads to activation of trypsinogen. Does not clot milk.</text>
        <dbReference type="EC" id="3.4.23.18"/>
    </reaction>
</comment>
<comment type="subunit">
    <text evidence="1">Monomer.</text>
</comment>
<comment type="subcellular location">
    <subcellularLocation>
        <location evidence="1">Secreted</location>
    </subcellularLocation>
</comment>
<comment type="similarity">
    <text evidence="3">Belongs to the peptidase A1 family.</text>
</comment>
<protein>
    <recommendedName>
        <fullName evidence="4">Aspergillopepsin-1</fullName>
        <ecNumber evidence="1">3.4.23.18</ecNumber>
    </recommendedName>
    <alternativeName>
        <fullName>Aspartic protease pepA</fullName>
    </alternativeName>
    <alternativeName>
        <fullName>Aspergillopepsin I</fullName>
    </alternativeName>
    <alternativeName>
        <fullName>Aspergillopeptidase A</fullName>
    </alternativeName>
</protein>
<feature type="signal peptide" evidence="2">
    <location>
        <begin position="1"/>
        <end position="20"/>
    </location>
</feature>
<feature type="propeptide" id="PRO_0000407045" description="Activation peptide" evidence="1">
    <location>
        <begin position="21"/>
        <end position="69"/>
    </location>
</feature>
<feature type="chain" id="PRO_5000220965" description="Aspergillopepsin-1">
    <location>
        <begin position="70"/>
        <end position="394"/>
    </location>
</feature>
<feature type="domain" description="Peptidase A1" evidence="3">
    <location>
        <begin position="85"/>
        <end position="391"/>
    </location>
</feature>
<feature type="active site" evidence="3">
    <location>
        <position position="101"/>
    </location>
</feature>
<feature type="active site" evidence="3">
    <location>
        <position position="283"/>
    </location>
</feature>
<feature type="disulfide bond" evidence="3">
    <location>
        <begin position="319"/>
        <end position="354"/>
    </location>
</feature>
<proteinExistence type="inferred from homology"/>
<keyword id="KW-0064">Aspartyl protease</keyword>
<keyword id="KW-1015">Disulfide bond</keyword>
<keyword id="KW-0378">Hydrolase</keyword>
<keyword id="KW-0645">Protease</keyword>
<keyword id="KW-1185">Reference proteome</keyword>
<keyword id="KW-0964">Secreted</keyword>
<keyword id="KW-0732">Signal</keyword>
<keyword id="KW-0865">Zymogen</keyword>
<evidence type="ECO:0000250" key="1">
    <source>
        <dbReference type="UniProtKB" id="Q12567"/>
    </source>
</evidence>
<evidence type="ECO:0000255" key="2"/>
<evidence type="ECO:0000255" key="3">
    <source>
        <dbReference type="PROSITE-ProRule" id="PRU01103"/>
    </source>
</evidence>
<evidence type="ECO:0000305" key="4"/>